<sequence>MHCDVLWHNAQLMTLDAADGGLGIVDDGIVACRHGHIVYAGAAAQAPALQPDSAHDCRRRWISPGLIDCHTHLVYAGNRANEFEQRLRGASYADIAAAGGGIVATVRATRAADDAALLAASLPRLDAMLGEGVTTLEIKSGYGLTLDDEVKQLRVARQLAALRKVEVVPTFLGAHAVPPGGQAQHYIDQVCTQMIPAIATQGLAEAVDVFCEHLAFSQAQAEKVFVAAQAHGLRIKIHAEQLSNQHGAELAARYGALSADHIEYLDQTGIAAMAAAGTVAVLLPGAFYFTRDTQLPPIAALRTAGVPLALATDCNPGTSPLTSPLLAMNMAATLFRMTVDECIAGFTREAARALGRSERLGQLRAGMDCDLAIWNIDAPADLVYRMGFNPLHARVWRGHLC</sequence>
<organism>
    <name type="scientific">Xanthomonas euvesicatoria pv. vesicatoria (strain 85-10)</name>
    <name type="common">Xanthomonas campestris pv. vesicatoria</name>
    <dbReference type="NCBI Taxonomy" id="316273"/>
    <lineage>
        <taxon>Bacteria</taxon>
        <taxon>Pseudomonadati</taxon>
        <taxon>Pseudomonadota</taxon>
        <taxon>Gammaproteobacteria</taxon>
        <taxon>Lysobacterales</taxon>
        <taxon>Lysobacteraceae</taxon>
        <taxon>Xanthomonas</taxon>
    </lineage>
</organism>
<evidence type="ECO:0000255" key="1">
    <source>
        <dbReference type="HAMAP-Rule" id="MF_00372"/>
    </source>
</evidence>
<evidence type="ECO:0000305" key="2"/>
<dbReference type="EC" id="3.5.2.7" evidence="1"/>
<dbReference type="EMBL" id="AM039952">
    <property type="protein sequence ID" value="CAJ23356.1"/>
    <property type="status" value="ALT_INIT"/>
    <property type="molecule type" value="Genomic_DNA"/>
</dbReference>
<dbReference type="RefSeq" id="WP_011347038.1">
    <property type="nucleotide sequence ID" value="NZ_CP017190.1"/>
</dbReference>
<dbReference type="SMR" id="Q3BV03"/>
<dbReference type="STRING" id="456327.BJD11_14185"/>
<dbReference type="KEGG" id="xcv:XCV1679"/>
<dbReference type="eggNOG" id="COG1228">
    <property type="taxonomic scope" value="Bacteria"/>
</dbReference>
<dbReference type="HOGENOM" id="CLU_041647_0_0_6"/>
<dbReference type="UniPathway" id="UPA00379">
    <property type="reaction ID" value="UER00551"/>
</dbReference>
<dbReference type="Proteomes" id="UP000007069">
    <property type="component" value="Chromosome"/>
</dbReference>
<dbReference type="GO" id="GO:0005737">
    <property type="term" value="C:cytoplasm"/>
    <property type="evidence" value="ECO:0007669"/>
    <property type="project" value="UniProtKB-SubCell"/>
</dbReference>
<dbReference type="GO" id="GO:0050480">
    <property type="term" value="F:imidazolonepropionase activity"/>
    <property type="evidence" value="ECO:0007669"/>
    <property type="project" value="UniProtKB-UniRule"/>
</dbReference>
<dbReference type="GO" id="GO:0005506">
    <property type="term" value="F:iron ion binding"/>
    <property type="evidence" value="ECO:0007669"/>
    <property type="project" value="UniProtKB-UniRule"/>
</dbReference>
<dbReference type="GO" id="GO:0008270">
    <property type="term" value="F:zinc ion binding"/>
    <property type="evidence" value="ECO:0007669"/>
    <property type="project" value="UniProtKB-UniRule"/>
</dbReference>
<dbReference type="GO" id="GO:0019556">
    <property type="term" value="P:L-histidine catabolic process to glutamate and formamide"/>
    <property type="evidence" value="ECO:0007669"/>
    <property type="project" value="UniProtKB-UniPathway"/>
</dbReference>
<dbReference type="GO" id="GO:0019557">
    <property type="term" value="P:L-histidine catabolic process to glutamate and formate"/>
    <property type="evidence" value="ECO:0007669"/>
    <property type="project" value="UniProtKB-UniPathway"/>
</dbReference>
<dbReference type="FunFam" id="3.20.20.140:FF:000007">
    <property type="entry name" value="Imidazolonepropionase"/>
    <property type="match status" value="1"/>
</dbReference>
<dbReference type="Gene3D" id="3.20.20.140">
    <property type="entry name" value="Metal-dependent hydrolases"/>
    <property type="match status" value="1"/>
</dbReference>
<dbReference type="Gene3D" id="2.30.40.10">
    <property type="entry name" value="Urease, subunit C, domain 1"/>
    <property type="match status" value="1"/>
</dbReference>
<dbReference type="HAMAP" id="MF_00372">
    <property type="entry name" value="HutI"/>
    <property type="match status" value="1"/>
</dbReference>
<dbReference type="InterPro" id="IPR006680">
    <property type="entry name" value="Amidohydro-rel"/>
</dbReference>
<dbReference type="InterPro" id="IPR005920">
    <property type="entry name" value="HutI"/>
</dbReference>
<dbReference type="InterPro" id="IPR011059">
    <property type="entry name" value="Metal-dep_hydrolase_composite"/>
</dbReference>
<dbReference type="InterPro" id="IPR032466">
    <property type="entry name" value="Metal_Hydrolase"/>
</dbReference>
<dbReference type="NCBIfam" id="TIGR01224">
    <property type="entry name" value="hutI"/>
    <property type="match status" value="1"/>
</dbReference>
<dbReference type="PANTHER" id="PTHR42752">
    <property type="entry name" value="IMIDAZOLONEPROPIONASE"/>
    <property type="match status" value="1"/>
</dbReference>
<dbReference type="PANTHER" id="PTHR42752:SF1">
    <property type="entry name" value="IMIDAZOLONEPROPIONASE-RELATED"/>
    <property type="match status" value="1"/>
</dbReference>
<dbReference type="Pfam" id="PF01979">
    <property type="entry name" value="Amidohydro_1"/>
    <property type="match status" value="1"/>
</dbReference>
<dbReference type="SUPFAM" id="SSF51338">
    <property type="entry name" value="Composite domain of metallo-dependent hydrolases"/>
    <property type="match status" value="1"/>
</dbReference>
<dbReference type="SUPFAM" id="SSF51556">
    <property type="entry name" value="Metallo-dependent hydrolases"/>
    <property type="match status" value="1"/>
</dbReference>
<accession>Q3BV03</accession>
<proteinExistence type="inferred from homology"/>
<protein>
    <recommendedName>
        <fullName evidence="1">Imidazolonepropionase</fullName>
        <ecNumber evidence="1">3.5.2.7</ecNumber>
    </recommendedName>
    <alternativeName>
        <fullName evidence="1">Imidazolone-5-propionate hydrolase</fullName>
    </alternativeName>
</protein>
<feature type="chain" id="PRO_0000306537" description="Imidazolonepropionase">
    <location>
        <begin position="1"/>
        <end position="401"/>
    </location>
</feature>
<feature type="binding site" evidence="1">
    <location>
        <position position="70"/>
    </location>
    <ligand>
        <name>Fe(3+)</name>
        <dbReference type="ChEBI" id="CHEBI:29034"/>
    </ligand>
</feature>
<feature type="binding site" evidence="1">
    <location>
        <position position="70"/>
    </location>
    <ligand>
        <name>Zn(2+)</name>
        <dbReference type="ChEBI" id="CHEBI:29105"/>
    </ligand>
</feature>
<feature type="binding site" evidence="1">
    <location>
        <position position="72"/>
    </location>
    <ligand>
        <name>Fe(3+)</name>
        <dbReference type="ChEBI" id="CHEBI:29034"/>
    </ligand>
</feature>
<feature type="binding site" evidence="1">
    <location>
        <position position="72"/>
    </location>
    <ligand>
        <name>Zn(2+)</name>
        <dbReference type="ChEBI" id="CHEBI:29105"/>
    </ligand>
</feature>
<feature type="binding site" evidence="1">
    <location>
        <position position="79"/>
    </location>
    <ligand>
        <name>4-imidazolone-5-propanoate</name>
        <dbReference type="ChEBI" id="CHEBI:77893"/>
    </ligand>
</feature>
<feature type="binding site" evidence="1">
    <location>
        <position position="142"/>
    </location>
    <ligand>
        <name>4-imidazolone-5-propanoate</name>
        <dbReference type="ChEBI" id="CHEBI:77893"/>
    </ligand>
</feature>
<feature type="binding site" evidence="1">
    <location>
        <position position="142"/>
    </location>
    <ligand>
        <name>N-formimidoyl-L-glutamate</name>
        <dbReference type="ChEBI" id="CHEBI:58928"/>
    </ligand>
</feature>
<feature type="binding site" evidence="1">
    <location>
        <position position="175"/>
    </location>
    <ligand>
        <name>4-imidazolone-5-propanoate</name>
        <dbReference type="ChEBI" id="CHEBI:77893"/>
    </ligand>
</feature>
<feature type="binding site" evidence="1">
    <location>
        <position position="238"/>
    </location>
    <ligand>
        <name>Fe(3+)</name>
        <dbReference type="ChEBI" id="CHEBI:29034"/>
    </ligand>
</feature>
<feature type="binding site" evidence="1">
    <location>
        <position position="238"/>
    </location>
    <ligand>
        <name>Zn(2+)</name>
        <dbReference type="ChEBI" id="CHEBI:29105"/>
    </ligand>
</feature>
<feature type="binding site" evidence="1">
    <location>
        <position position="241"/>
    </location>
    <ligand>
        <name>4-imidazolone-5-propanoate</name>
        <dbReference type="ChEBI" id="CHEBI:77893"/>
    </ligand>
</feature>
<feature type="binding site" evidence="1">
    <location>
        <position position="313"/>
    </location>
    <ligand>
        <name>Fe(3+)</name>
        <dbReference type="ChEBI" id="CHEBI:29034"/>
    </ligand>
</feature>
<feature type="binding site" evidence="1">
    <location>
        <position position="313"/>
    </location>
    <ligand>
        <name>Zn(2+)</name>
        <dbReference type="ChEBI" id="CHEBI:29105"/>
    </ligand>
</feature>
<feature type="binding site" evidence="1">
    <location>
        <position position="315"/>
    </location>
    <ligand>
        <name>N-formimidoyl-L-glutamate</name>
        <dbReference type="ChEBI" id="CHEBI:58928"/>
    </ligand>
</feature>
<feature type="binding site" evidence="1">
    <location>
        <position position="317"/>
    </location>
    <ligand>
        <name>N-formimidoyl-L-glutamate</name>
        <dbReference type="ChEBI" id="CHEBI:58928"/>
    </ligand>
</feature>
<feature type="binding site" evidence="1">
    <location>
        <position position="318"/>
    </location>
    <ligand>
        <name>4-imidazolone-5-propanoate</name>
        <dbReference type="ChEBI" id="CHEBI:77893"/>
    </ligand>
</feature>
<gene>
    <name evidence="1" type="primary">hutI</name>
    <name type="ordered locus">XCV1679</name>
</gene>
<reference key="1">
    <citation type="journal article" date="2005" name="J. Bacteriol.">
        <title>Insights into genome plasticity and pathogenicity of the plant pathogenic Bacterium Xanthomonas campestris pv. vesicatoria revealed by the complete genome sequence.</title>
        <authorList>
            <person name="Thieme F."/>
            <person name="Koebnik R."/>
            <person name="Bekel T."/>
            <person name="Berger C."/>
            <person name="Boch J."/>
            <person name="Buettner D."/>
            <person name="Caldana C."/>
            <person name="Gaigalat L."/>
            <person name="Goesmann A."/>
            <person name="Kay S."/>
            <person name="Kirchner O."/>
            <person name="Lanz C."/>
            <person name="Linke B."/>
            <person name="McHardy A.C."/>
            <person name="Meyer F."/>
            <person name="Mittenhuber G."/>
            <person name="Nies D.H."/>
            <person name="Niesbach-Kloesgen U."/>
            <person name="Patschkowski T."/>
            <person name="Rueckert C."/>
            <person name="Rupp O."/>
            <person name="Schneiker S."/>
            <person name="Schuster S.C."/>
            <person name="Vorhoelter F.J."/>
            <person name="Weber E."/>
            <person name="Puehler A."/>
            <person name="Bonas U."/>
            <person name="Bartels D."/>
            <person name="Kaiser O."/>
        </authorList>
    </citation>
    <scope>NUCLEOTIDE SEQUENCE [LARGE SCALE GENOMIC DNA]</scope>
    <source>
        <strain>85-10</strain>
    </source>
</reference>
<keyword id="KW-0963">Cytoplasm</keyword>
<keyword id="KW-0369">Histidine metabolism</keyword>
<keyword id="KW-0378">Hydrolase</keyword>
<keyword id="KW-0408">Iron</keyword>
<keyword id="KW-0479">Metal-binding</keyword>
<keyword id="KW-0862">Zinc</keyword>
<comment type="function">
    <text evidence="1">Catalyzes the hydrolytic cleavage of the carbon-nitrogen bond in imidazolone-5-propanoate to yield N-formimidoyl-L-glutamate. It is the third step in the universal histidine degradation pathway.</text>
</comment>
<comment type="catalytic activity">
    <reaction evidence="1">
        <text>4-imidazolone-5-propanoate + H2O = N-formimidoyl-L-glutamate</text>
        <dbReference type="Rhea" id="RHEA:23660"/>
        <dbReference type="ChEBI" id="CHEBI:15377"/>
        <dbReference type="ChEBI" id="CHEBI:58928"/>
        <dbReference type="ChEBI" id="CHEBI:77893"/>
        <dbReference type="EC" id="3.5.2.7"/>
    </reaction>
</comment>
<comment type="cofactor">
    <cofactor evidence="1">
        <name>Zn(2+)</name>
        <dbReference type="ChEBI" id="CHEBI:29105"/>
    </cofactor>
    <cofactor evidence="1">
        <name>Fe(3+)</name>
        <dbReference type="ChEBI" id="CHEBI:29034"/>
    </cofactor>
    <text evidence="1">Binds 1 zinc or iron ion per subunit.</text>
</comment>
<comment type="pathway">
    <text evidence="1">Amino-acid degradation; L-histidine degradation into L-glutamate; N-formimidoyl-L-glutamate from L-histidine: step 3/3.</text>
</comment>
<comment type="subcellular location">
    <subcellularLocation>
        <location evidence="1">Cytoplasm</location>
    </subcellularLocation>
</comment>
<comment type="similarity">
    <text evidence="1">Belongs to the metallo-dependent hydrolases superfamily. HutI family.</text>
</comment>
<comment type="sequence caution" evidence="2">
    <conflict type="erroneous initiation">
        <sequence resource="EMBL-CDS" id="CAJ23356"/>
    </conflict>
</comment>
<name>HUTI_XANE5</name>